<organism>
    <name type="scientific">Salmonella paratyphi A (strain AKU_12601)</name>
    <dbReference type="NCBI Taxonomy" id="554290"/>
    <lineage>
        <taxon>Bacteria</taxon>
        <taxon>Pseudomonadati</taxon>
        <taxon>Pseudomonadota</taxon>
        <taxon>Gammaproteobacteria</taxon>
        <taxon>Enterobacterales</taxon>
        <taxon>Enterobacteriaceae</taxon>
        <taxon>Salmonella</taxon>
    </lineage>
</organism>
<gene>
    <name evidence="1" type="primary">ycfP</name>
    <name type="ordered locus">SSPA1526</name>
</gene>
<proteinExistence type="inferred from homology"/>
<reference key="1">
    <citation type="journal article" date="2009" name="BMC Genomics">
        <title>Pseudogene accumulation in the evolutionary histories of Salmonella enterica serovars Paratyphi A and Typhi.</title>
        <authorList>
            <person name="Holt K.E."/>
            <person name="Thomson N.R."/>
            <person name="Wain J."/>
            <person name="Langridge G.C."/>
            <person name="Hasan R."/>
            <person name="Bhutta Z.A."/>
            <person name="Quail M.A."/>
            <person name="Norbertczak H."/>
            <person name="Walker D."/>
            <person name="Simmonds M."/>
            <person name="White B."/>
            <person name="Bason N."/>
            <person name="Mungall K."/>
            <person name="Dougan G."/>
            <person name="Parkhill J."/>
        </authorList>
    </citation>
    <scope>NUCLEOTIDE SEQUENCE [LARGE SCALE GENOMIC DNA]</scope>
    <source>
        <strain>AKU_12601</strain>
    </source>
</reference>
<comment type="similarity">
    <text evidence="1">Belongs to the UPF0227 family.</text>
</comment>
<name>YCFP_SALPK</name>
<dbReference type="EMBL" id="FM200053">
    <property type="protein sequence ID" value="CAR59709.1"/>
    <property type="molecule type" value="Genomic_DNA"/>
</dbReference>
<dbReference type="RefSeq" id="WP_000587944.1">
    <property type="nucleotide sequence ID" value="NC_011147.1"/>
</dbReference>
<dbReference type="SMR" id="B5BAG6"/>
<dbReference type="ESTHER" id="salty-ycfp">
    <property type="family name" value="abh_upf00227"/>
</dbReference>
<dbReference type="KEGG" id="sek:SSPA1526"/>
<dbReference type="HOGENOM" id="CLU_128769_0_0_6"/>
<dbReference type="Proteomes" id="UP000001869">
    <property type="component" value="Chromosome"/>
</dbReference>
<dbReference type="FunFam" id="3.40.50.1820:FF:000007">
    <property type="entry name" value="UPF0227 protein YcfP"/>
    <property type="match status" value="1"/>
</dbReference>
<dbReference type="Gene3D" id="3.40.50.1820">
    <property type="entry name" value="alpha/beta hydrolase"/>
    <property type="match status" value="1"/>
</dbReference>
<dbReference type="HAMAP" id="MF_01047">
    <property type="entry name" value="UPF0227"/>
    <property type="match status" value="1"/>
</dbReference>
<dbReference type="InterPro" id="IPR029058">
    <property type="entry name" value="AB_hydrolase_fold"/>
</dbReference>
<dbReference type="InterPro" id="IPR022987">
    <property type="entry name" value="UPF0227"/>
</dbReference>
<dbReference type="InterPro" id="IPR008886">
    <property type="entry name" value="UPF0227/Esterase_YqiA"/>
</dbReference>
<dbReference type="NCBIfam" id="NF003431">
    <property type="entry name" value="PRK04940.1"/>
    <property type="match status" value="1"/>
</dbReference>
<dbReference type="PANTHER" id="PTHR35602">
    <property type="entry name" value="ESTERASE YQIA-RELATED"/>
    <property type="match status" value="1"/>
</dbReference>
<dbReference type="PANTHER" id="PTHR35602:SF2">
    <property type="entry name" value="UPF0227 PROTEIN YCFP"/>
    <property type="match status" value="1"/>
</dbReference>
<dbReference type="Pfam" id="PF05728">
    <property type="entry name" value="UPF0227"/>
    <property type="match status" value="1"/>
</dbReference>
<dbReference type="SUPFAM" id="SSF53474">
    <property type="entry name" value="alpha/beta-Hydrolases"/>
    <property type="match status" value="1"/>
</dbReference>
<feature type="chain" id="PRO_1000136200" description="UPF0227 protein YcfP">
    <location>
        <begin position="1"/>
        <end position="180"/>
    </location>
</feature>
<evidence type="ECO:0000255" key="1">
    <source>
        <dbReference type="HAMAP-Rule" id="MF_01047"/>
    </source>
</evidence>
<accession>B5BAG6</accession>
<sequence>MIIYLHGFDSNSPGNHEKVLQLQFIDPDVRLVSYSTRHPKHDMQHLLKEVDKMLQLNVDERPLICGVGLGGYWAERIGFLCDIRQVVFNPNLFPYENMEGKIDRPEEYADIATKCVTNFREKNRDRCLVILSRHDEALDSQRSAQALHPFYEIVWDEEQTHKFKNISPYLQRIKAFKTLG</sequence>
<protein>
    <recommendedName>
        <fullName evidence="1">UPF0227 protein YcfP</fullName>
    </recommendedName>
</protein>